<protein>
    <recommendedName>
        <fullName evidence="1">Small ribosomal subunit protein uS19</fullName>
    </recommendedName>
    <alternativeName>
        <fullName evidence="2">30S ribosomal protein S19</fullName>
    </alternativeName>
</protein>
<accession>Q7MTL7</accession>
<comment type="function">
    <text evidence="1">Protein S19 forms a complex with S13 that binds strongly to the 16S ribosomal RNA.</text>
</comment>
<comment type="similarity">
    <text evidence="1">Belongs to the universal ribosomal protein uS19 family.</text>
</comment>
<reference key="1">
    <citation type="journal article" date="2003" name="J. Bacteriol.">
        <title>Complete genome sequence of the oral pathogenic bacterium Porphyromonas gingivalis strain W83.</title>
        <authorList>
            <person name="Nelson K.E."/>
            <person name="Fleischmann R.D."/>
            <person name="DeBoy R.T."/>
            <person name="Paulsen I.T."/>
            <person name="Fouts D.E."/>
            <person name="Eisen J.A."/>
            <person name="Daugherty S.C."/>
            <person name="Dodson R.J."/>
            <person name="Durkin A.S."/>
            <person name="Gwinn M.L."/>
            <person name="Haft D.H."/>
            <person name="Kolonay J.F."/>
            <person name="Nelson W.C."/>
            <person name="Mason T.M."/>
            <person name="Tallon L."/>
            <person name="Gray J."/>
            <person name="Granger D."/>
            <person name="Tettelin H."/>
            <person name="Dong H."/>
            <person name="Galvin J.L."/>
            <person name="Duncan M.J."/>
            <person name="Dewhirst F.E."/>
            <person name="Fraser C.M."/>
        </authorList>
    </citation>
    <scope>NUCLEOTIDE SEQUENCE [LARGE SCALE GENOMIC DNA]</scope>
    <source>
        <strain>ATCC BAA-308 / W83</strain>
    </source>
</reference>
<keyword id="KW-1185">Reference proteome</keyword>
<keyword id="KW-0687">Ribonucleoprotein</keyword>
<keyword id="KW-0689">Ribosomal protein</keyword>
<keyword id="KW-0694">RNA-binding</keyword>
<keyword id="KW-0699">rRNA-binding</keyword>
<name>RS19_PORGI</name>
<feature type="chain" id="PRO_0000129876" description="Small ribosomal subunit protein uS19">
    <location>
        <begin position="1"/>
        <end position="89"/>
    </location>
</feature>
<dbReference type="EMBL" id="AE015924">
    <property type="protein sequence ID" value="AAQ66915.1"/>
    <property type="molecule type" value="Genomic_DNA"/>
</dbReference>
<dbReference type="RefSeq" id="WP_010956447.1">
    <property type="nucleotide sequence ID" value="NC_002950.2"/>
</dbReference>
<dbReference type="SMR" id="Q7MTL7"/>
<dbReference type="STRING" id="242619.PG_1934"/>
<dbReference type="EnsemblBacteria" id="AAQ66915">
    <property type="protein sequence ID" value="AAQ66915"/>
    <property type="gene ID" value="PG_1934"/>
</dbReference>
<dbReference type="GeneID" id="29257015"/>
<dbReference type="GeneID" id="57239592"/>
<dbReference type="KEGG" id="pgi:PG_1934"/>
<dbReference type="eggNOG" id="COG0185">
    <property type="taxonomic scope" value="Bacteria"/>
</dbReference>
<dbReference type="HOGENOM" id="CLU_144911_0_1_10"/>
<dbReference type="Proteomes" id="UP000000588">
    <property type="component" value="Chromosome"/>
</dbReference>
<dbReference type="GO" id="GO:0005737">
    <property type="term" value="C:cytoplasm"/>
    <property type="evidence" value="ECO:0007669"/>
    <property type="project" value="UniProtKB-ARBA"/>
</dbReference>
<dbReference type="GO" id="GO:0015935">
    <property type="term" value="C:small ribosomal subunit"/>
    <property type="evidence" value="ECO:0007669"/>
    <property type="project" value="InterPro"/>
</dbReference>
<dbReference type="GO" id="GO:0019843">
    <property type="term" value="F:rRNA binding"/>
    <property type="evidence" value="ECO:0007669"/>
    <property type="project" value="UniProtKB-UniRule"/>
</dbReference>
<dbReference type="GO" id="GO:0003735">
    <property type="term" value="F:structural constituent of ribosome"/>
    <property type="evidence" value="ECO:0007669"/>
    <property type="project" value="InterPro"/>
</dbReference>
<dbReference type="GO" id="GO:0000028">
    <property type="term" value="P:ribosomal small subunit assembly"/>
    <property type="evidence" value="ECO:0007669"/>
    <property type="project" value="TreeGrafter"/>
</dbReference>
<dbReference type="GO" id="GO:0006412">
    <property type="term" value="P:translation"/>
    <property type="evidence" value="ECO:0007669"/>
    <property type="project" value="UniProtKB-UniRule"/>
</dbReference>
<dbReference type="FunFam" id="3.30.860.10:FF:000001">
    <property type="entry name" value="30S ribosomal protein S19"/>
    <property type="match status" value="1"/>
</dbReference>
<dbReference type="Gene3D" id="3.30.860.10">
    <property type="entry name" value="30s Ribosomal Protein S19, Chain A"/>
    <property type="match status" value="1"/>
</dbReference>
<dbReference type="HAMAP" id="MF_00531">
    <property type="entry name" value="Ribosomal_uS19"/>
    <property type="match status" value="1"/>
</dbReference>
<dbReference type="InterPro" id="IPR002222">
    <property type="entry name" value="Ribosomal_uS19"/>
</dbReference>
<dbReference type="InterPro" id="IPR005732">
    <property type="entry name" value="Ribosomal_uS19_bac-type"/>
</dbReference>
<dbReference type="InterPro" id="IPR020934">
    <property type="entry name" value="Ribosomal_uS19_CS"/>
</dbReference>
<dbReference type="InterPro" id="IPR023575">
    <property type="entry name" value="Ribosomal_uS19_SF"/>
</dbReference>
<dbReference type="NCBIfam" id="TIGR01050">
    <property type="entry name" value="rpsS_bact"/>
    <property type="match status" value="1"/>
</dbReference>
<dbReference type="PANTHER" id="PTHR11880">
    <property type="entry name" value="RIBOSOMAL PROTEIN S19P FAMILY MEMBER"/>
    <property type="match status" value="1"/>
</dbReference>
<dbReference type="PANTHER" id="PTHR11880:SF8">
    <property type="entry name" value="SMALL RIBOSOMAL SUBUNIT PROTEIN US19M"/>
    <property type="match status" value="1"/>
</dbReference>
<dbReference type="Pfam" id="PF00203">
    <property type="entry name" value="Ribosomal_S19"/>
    <property type="match status" value="1"/>
</dbReference>
<dbReference type="PIRSF" id="PIRSF002144">
    <property type="entry name" value="Ribosomal_S19"/>
    <property type="match status" value="1"/>
</dbReference>
<dbReference type="PRINTS" id="PR00975">
    <property type="entry name" value="RIBOSOMALS19"/>
</dbReference>
<dbReference type="SUPFAM" id="SSF54570">
    <property type="entry name" value="Ribosomal protein S19"/>
    <property type="match status" value="1"/>
</dbReference>
<dbReference type="PROSITE" id="PS00323">
    <property type="entry name" value="RIBOSOMAL_S19"/>
    <property type="match status" value="1"/>
</dbReference>
<proteinExistence type="inferred from homology"/>
<sequence length="89" mass="9909">MSRSLKKGPYINLKLEKKVLAMNESGKKAVIKTWARASMISPDFVGHTIAVHNGNKFIPVFVTENMVGHKLGEFSPTRTFRGHAGNKKK</sequence>
<organism>
    <name type="scientific">Porphyromonas gingivalis (strain ATCC BAA-308 / W83)</name>
    <dbReference type="NCBI Taxonomy" id="242619"/>
    <lineage>
        <taxon>Bacteria</taxon>
        <taxon>Pseudomonadati</taxon>
        <taxon>Bacteroidota</taxon>
        <taxon>Bacteroidia</taxon>
        <taxon>Bacteroidales</taxon>
        <taxon>Porphyromonadaceae</taxon>
        <taxon>Porphyromonas</taxon>
    </lineage>
</organism>
<evidence type="ECO:0000255" key="1">
    <source>
        <dbReference type="HAMAP-Rule" id="MF_00531"/>
    </source>
</evidence>
<evidence type="ECO:0000305" key="2"/>
<gene>
    <name evidence="1" type="primary">rpsS</name>
    <name type="ordered locus">PG_1934</name>
</gene>